<feature type="chain" id="PRO_0000298917" description="Zinc finger matrin-type protein 4">
    <location>
        <begin position="1"/>
        <end position="229"/>
    </location>
</feature>
<feature type="zinc finger region" description="Matrin-type 1" evidence="1">
    <location>
        <begin position="14"/>
        <end position="44"/>
    </location>
</feature>
<feature type="zinc finger region" description="Matrin-type 2" evidence="1">
    <location>
        <begin position="72"/>
        <end position="106"/>
    </location>
</feature>
<feature type="zinc finger region" description="Matrin-type 3" evidence="1">
    <location>
        <begin position="145"/>
        <end position="175"/>
    </location>
</feature>
<feature type="zinc finger region" description="Matrin-type 4" evidence="1">
    <location>
        <begin position="198"/>
        <end position="228"/>
    </location>
</feature>
<feature type="splice variant" id="VSP_027478" description="In isoform 3." evidence="2">
    <location>
        <begin position="1"/>
        <end position="69"/>
    </location>
</feature>
<feature type="splice variant" id="VSP_027477" description="In isoform 2." evidence="3">
    <original>NLKNK</original>
    <variation>K</variation>
    <location>
        <begin position="225"/>
        <end position="229"/>
    </location>
</feature>
<gene>
    <name type="primary">Zmat4</name>
</gene>
<evidence type="ECO:0000255" key="1">
    <source>
        <dbReference type="PROSITE-ProRule" id="PRU00130"/>
    </source>
</evidence>
<evidence type="ECO:0000303" key="2">
    <source>
    </source>
</evidence>
<evidence type="ECO:0000303" key="3">
    <source>
    </source>
</evidence>
<proteinExistence type="evidence at transcript level"/>
<dbReference type="EMBL" id="AK036254">
    <property type="protein sequence ID" value="BAC29363.1"/>
    <property type="molecule type" value="mRNA"/>
</dbReference>
<dbReference type="EMBL" id="AK134793">
    <property type="protein sequence ID" value="BAE22287.1"/>
    <property type="molecule type" value="mRNA"/>
</dbReference>
<dbReference type="EMBL" id="AK140391">
    <property type="protein sequence ID" value="BAE24370.1"/>
    <property type="molecule type" value="mRNA"/>
</dbReference>
<dbReference type="EMBL" id="AK140413">
    <property type="protein sequence ID" value="BAE24377.1"/>
    <property type="molecule type" value="mRNA"/>
</dbReference>
<dbReference type="EMBL" id="BC065110">
    <property type="protein sequence ID" value="AAH65110.1"/>
    <property type="molecule type" value="mRNA"/>
</dbReference>
<dbReference type="EMBL" id="BC079657">
    <property type="protein sequence ID" value="AAH79657.1"/>
    <property type="molecule type" value="mRNA"/>
</dbReference>
<dbReference type="CCDS" id="CCDS22192.1">
    <molecule id="Q8BZ94-1"/>
</dbReference>
<dbReference type="CCDS" id="CCDS85514.1">
    <molecule id="Q8BZ94-3"/>
</dbReference>
<dbReference type="RefSeq" id="NP_001264168.1">
    <molecule id="Q8BZ94-3"/>
    <property type="nucleotide sequence ID" value="NM_001277239.1"/>
</dbReference>
<dbReference type="RefSeq" id="NP_796060.1">
    <molecule id="Q8BZ94-1"/>
    <property type="nucleotide sequence ID" value="NM_177086.4"/>
</dbReference>
<dbReference type="RefSeq" id="XP_006509203.1">
    <molecule id="Q8BZ94-1"/>
    <property type="nucleotide sequence ID" value="XM_006509140.4"/>
</dbReference>
<dbReference type="RefSeq" id="XP_006509204.1">
    <molecule id="Q8BZ94-1"/>
    <property type="nucleotide sequence ID" value="XM_006509141.3"/>
</dbReference>
<dbReference type="RefSeq" id="XP_011240443.1">
    <molecule id="Q8BZ94-1"/>
    <property type="nucleotide sequence ID" value="XM_011242141.3"/>
</dbReference>
<dbReference type="RefSeq" id="XP_011240444.1">
    <molecule id="Q8BZ94-1"/>
    <property type="nucleotide sequence ID" value="XM_011242142.3"/>
</dbReference>
<dbReference type="RefSeq" id="XP_017168347.1">
    <molecule id="Q8BZ94-1"/>
    <property type="nucleotide sequence ID" value="XM_017312858.3"/>
</dbReference>
<dbReference type="RefSeq" id="XP_030099472.1">
    <molecule id="Q8BZ94-3"/>
    <property type="nucleotide sequence ID" value="XM_030243612.2"/>
</dbReference>
<dbReference type="SMR" id="Q8BZ94"/>
<dbReference type="FunCoup" id="Q8BZ94">
    <property type="interactions" value="120"/>
</dbReference>
<dbReference type="STRING" id="10090.ENSMUSP00000049430"/>
<dbReference type="PhosphoSitePlus" id="Q8BZ94"/>
<dbReference type="PaxDb" id="10090-ENSMUSP00000049430"/>
<dbReference type="PeptideAtlas" id="Q8BZ94"/>
<dbReference type="ProteomicsDB" id="274994">
    <molecule id="Q8BZ94-1"/>
</dbReference>
<dbReference type="ProteomicsDB" id="274995">
    <molecule id="Q8BZ94-2"/>
</dbReference>
<dbReference type="ProteomicsDB" id="274996">
    <molecule id="Q8BZ94-3"/>
</dbReference>
<dbReference type="Antibodypedia" id="23910">
    <property type="antibodies" value="150 antibodies from 17 providers"/>
</dbReference>
<dbReference type="DNASU" id="320158"/>
<dbReference type="Ensembl" id="ENSMUST00000042352.11">
    <molecule id="Q8BZ94-1"/>
    <property type="protein sequence ID" value="ENSMUSP00000049430.5"/>
    <property type="gene ID" value="ENSMUSG00000037492.17"/>
</dbReference>
<dbReference type="Ensembl" id="ENSMUST00000123412.2">
    <molecule id="Q8BZ94-2"/>
    <property type="protein sequence ID" value="ENSMUSP00000121626.2"/>
    <property type="gene ID" value="ENSMUSG00000037492.17"/>
</dbReference>
<dbReference type="Ensembl" id="ENSMUST00000207301.2">
    <molecule id="Q8BZ94-3"/>
    <property type="protein sequence ID" value="ENSMUSP00000146734.2"/>
    <property type="gene ID" value="ENSMUSG00000037492.17"/>
</dbReference>
<dbReference type="GeneID" id="320158"/>
<dbReference type="KEGG" id="mmu:320158"/>
<dbReference type="UCSC" id="uc009lew.3">
    <molecule id="Q8BZ94-1"/>
    <property type="organism name" value="mouse"/>
</dbReference>
<dbReference type="AGR" id="MGI:2443497"/>
<dbReference type="CTD" id="79698"/>
<dbReference type="MGI" id="MGI:2443497">
    <property type="gene designation" value="Zmat4"/>
</dbReference>
<dbReference type="VEuPathDB" id="HostDB:ENSMUSG00000037492"/>
<dbReference type="eggNOG" id="ENOG502QTR6">
    <property type="taxonomic scope" value="Eukaryota"/>
</dbReference>
<dbReference type="GeneTree" id="ENSGT00940000156888"/>
<dbReference type="HOGENOM" id="CLU_056875_1_0_1"/>
<dbReference type="InParanoid" id="Q8BZ94"/>
<dbReference type="OMA" id="RVAHYEX"/>
<dbReference type="OrthoDB" id="1925236at2759"/>
<dbReference type="PhylomeDB" id="Q8BZ94"/>
<dbReference type="TreeFam" id="TF350019"/>
<dbReference type="BioGRID-ORCS" id="320158">
    <property type="hits" value="1 hit in 76 CRISPR screens"/>
</dbReference>
<dbReference type="ChiTaRS" id="Zmat4">
    <property type="organism name" value="mouse"/>
</dbReference>
<dbReference type="PRO" id="PR:Q8BZ94"/>
<dbReference type="Proteomes" id="UP000000589">
    <property type="component" value="Chromosome 8"/>
</dbReference>
<dbReference type="RNAct" id="Q8BZ94">
    <property type="molecule type" value="protein"/>
</dbReference>
<dbReference type="Bgee" id="ENSMUSG00000037492">
    <property type="expression patterns" value="Expressed in medial dorsal nucleus of thalamus and 164 other cell types or tissues"/>
</dbReference>
<dbReference type="ExpressionAtlas" id="Q8BZ94">
    <property type="expression patterns" value="baseline and differential"/>
</dbReference>
<dbReference type="GO" id="GO:0005634">
    <property type="term" value="C:nucleus"/>
    <property type="evidence" value="ECO:0007669"/>
    <property type="project" value="UniProtKB-SubCell"/>
</dbReference>
<dbReference type="GO" id="GO:0003677">
    <property type="term" value="F:DNA binding"/>
    <property type="evidence" value="ECO:0007669"/>
    <property type="project" value="UniProtKB-KW"/>
</dbReference>
<dbReference type="GO" id="GO:0008270">
    <property type="term" value="F:zinc ion binding"/>
    <property type="evidence" value="ECO:0007669"/>
    <property type="project" value="UniProtKB-KW"/>
</dbReference>
<dbReference type="Gene3D" id="3.30.160.60">
    <property type="entry name" value="Classic Zinc Finger"/>
    <property type="match status" value="4"/>
</dbReference>
<dbReference type="InterPro" id="IPR000690">
    <property type="entry name" value="Matrin/U1-C_Znf_C2H2"/>
</dbReference>
<dbReference type="InterPro" id="IPR003604">
    <property type="entry name" value="Matrin/U1-like-C_Znf_C2H2"/>
</dbReference>
<dbReference type="InterPro" id="IPR051868">
    <property type="entry name" value="ZN346_ZMAT4"/>
</dbReference>
<dbReference type="InterPro" id="IPR022755">
    <property type="entry name" value="Znf_C2H2_jaz"/>
</dbReference>
<dbReference type="InterPro" id="IPR036236">
    <property type="entry name" value="Znf_C2H2_sf"/>
</dbReference>
<dbReference type="InterPro" id="IPR013087">
    <property type="entry name" value="Znf_C2H2_type"/>
</dbReference>
<dbReference type="PANTHER" id="PTHR46144:SF3">
    <property type="entry name" value="ZINC FINGER MATRIN-TYPE PROTEIN 4"/>
    <property type="match status" value="1"/>
</dbReference>
<dbReference type="PANTHER" id="PTHR46144">
    <property type="entry name" value="ZINC FINGER PROTEIN 385B-LIKE"/>
    <property type="match status" value="1"/>
</dbReference>
<dbReference type="Pfam" id="PF12171">
    <property type="entry name" value="zf-C2H2_jaz"/>
    <property type="match status" value="1"/>
</dbReference>
<dbReference type="Pfam" id="PF12874">
    <property type="entry name" value="zf-met"/>
    <property type="match status" value="3"/>
</dbReference>
<dbReference type="SMART" id="SM00355">
    <property type="entry name" value="ZnF_C2H2"/>
    <property type="match status" value="4"/>
</dbReference>
<dbReference type="SMART" id="SM00451">
    <property type="entry name" value="ZnF_U1"/>
    <property type="match status" value="4"/>
</dbReference>
<dbReference type="SUPFAM" id="SSF57667">
    <property type="entry name" value="beta-beta-alpha zinc fingers"/>
    <property type="match status" value="4"/>
</dbReference>
<dbReference type="PROSITE" id="PS50171">
    <property type="entry name" value="ZF_MATRIN"/>
    <property type="match status" value="1"/>
</dbReference>
<reference key="1">
    <citation type="journal article" date="2005" name="Science">
        <title>The transcriptional landscape of the mammalian genome.</title>
        <authorList>
            <person name="Carninci P."/>
            <person name="Kasukawa T."/>
            <person name="Katayama S."/>
            <person name="Gough J."/>
            <person name="Frith M.C."/>
            <person name="Maeda N."/>
            <person name="Oyama R."/>
            <person name="Ravasi T."/>
            <person name="Lenhard B."/>
            <person name="Wells C."/>
            <person name="Kodzius R."/>
            <person name="Shimokawa K."/>
            <person name="Bajic V.B."/>
            <person name="Brenner S.E."/>
            <person name="Batalov S."/>
            <person name="Forrest A.R."/>
            <person name="Zavolan M."/>
            <person name="Davis M.J."/>
            <person name="Wilming L.G."/>
            <person name="Aidinis V."/>
            <person name="Allen J.E."/>
            <person name="Ambesi-Impiombato A."/>
            <person name="Apweiler R."/>
            <person name="Aturaliya R.N."/>
            <person name="Bailey T.L."/>
            <person name="Bansal M."/>
            <person name="Baxter L."/>
            <person name="Beisel K.W."/>
            <person name="Bersano T."/>
            <person name="Bono H."/>
            <person name="Chalk A.M."/>
            <person name="Chiu K.P."/>
            <person name="Choudhary V."/>
            <person name="Christoffels A."/>
            <person name="Clutterbuck D.R."/>
            <person name="Crowe M.L."/>
            <person name="Dalla E."/>
            <person name="Dalrymple B.P."/>
            <person name="de Bono B."/>
            <person name="Della Gatta G."/>
            <person name="di Bernardo D."/>
            <person name="Down T."/>
            <person name="Engstrom P."/>
            <person name="Fagiolini M."/>
            <person name="Faulkner G."/>
            <person name="Fletcher C.F."/>
            <person name="Fukushima T."/>
            <person name="Furuno M."/>
            <person name="Futaki S."/>
            <person name="Gariboldi M."/>
            <person name="Georgii-Hemming P."/>
            <person name="Gingeras T.R."/>
            <person name="Gojobori T."/>
            <person name="Green R.E."/>
            <person name="Gustincich S."/>
            <person name="Harbers M."/>
            <person name="Hayashi Y."/>
            <person name="Hensch T.K."/>
            <person name="Hirokawa N."/>
            <person name="Hill D."/>
            <person name="Huminiecki L."/>
            <person name="Iacono M."/>
            <person name="Ikeo K."/>
            <person name="Iwama A."/>
            <person name="Ishikawa T."/>
            <person name="Jakt M."/>
            <person name="Kanapin A."/>
            <person name="Katoh M."/>
            <person name="Kawasawa Y."/>
            <person name="Kelso J."/>
            <person name="Kitamura H."/>
            <person name="Kitano H."/>
            <person name="Kollias G."/>
            <person name="Krishnan S.P."/>
            <person name="Kruger A."/>
            <person name="Kummerfeld S.K."/>
            <person name="Kurochkin I.V."/>
            <person name="Lareau L.F."/>
            <person name="Lazarevic D."/>
            <person name="Lipovich L."/>
            <person name="Liu J."/>
            <person name="Liuni S."/>
            <person name="McWilliam S."/>
            <person name="Madan Babu M."/>
            <person name="Madera M."/>
            <person name="Marchionni L."/>
            <person name="Matsuda H."/>
            <person name="Matsuzawa S."/>
            <person name="Miki H."/>
            <person name="Mignone F."/>
            <person name="Miyake S."/>
            <person name="Morris K."/>
            <person name="Mottagui-Tabar S."/>
            <person name="Mulder N."/>
            <person name="Nakano N."/>
            <person name="Nakauchi H."/>
            <person name="Ng P."/>
            <person name="Nilsson R."/>
            <person name="Nishiguchi S."/>
            <person name="Nishikawa S."/>
            <person name="Nori F."/>
            <person name="Ohara O."/>
            <person name="Okazaki Y."/>
            <person name="Orlando V."/>
            <person name="Pang K.C."/>
            <person name="Pavan W.J."/>
            <person name="Pavesi G."/>
            <person name="Pesole G."/>
            <person name="Petrovsky N."/>
            <person name="Piazza S."/>
            <person name="Reed J."/>
            <person name="Reid J.F."/>
            <person name="Ring B.Z."/>
            <person name="Ringwald M."/>
            <person name="Rost B."/>
            <person name="Ruan Y."/>
            <person name="Salzberg S.L."/>
            <person name="Sandelin A."/>
            <person name="Schneider C."/>
            <person name="Schoenbach C."/>
            <person name="Sekiguchi K."/>
            <person name="Semple C.A."/>
            <person name="Seno S."/>
            <person name="Sessa L."/>
            <person name="Sheng Y."/>
            <person name="Shibata Y."/>
            <person name="Shimada H."/>
            <person name="Shimada K."/>
            <person name="Silva D."/>
            <person name="Sinclair B."/>
            <person name="Sperling S."/>
            <person name="Stupka E."/>
            <person name="Sugiura K."/>
            <person name="Sultana R."/>
            <person name="Takenaka Y."/>
            <person name="Taki K."/>
            <person name="Tammoja K."/>
            <person name="Tan S.L."/>
            <person name="Tang S."/>
            <person name="Taylor M.S."/>
            <person name="Tegner J."/>
            <person name="Teichmann S.A."/>
            <person name="Ueda H.R."/>
            <person name="van Nimwegen E."/>
            <person name="Verardo R."/>
            <person name="Wei C.L."/>
            <person name="Yagi K."/>
            <person name="Yamanishi H."/>
            <person name="Zabarovsky E."/>
            <person name="Zhu S."/>
            <person name="Zimmer A."/>
            <person name="Hide W."/>
            <person name="Bult C."/>
            <person name="Grimmond S.M."/>
            <person name="Teasdale R.D."/>
            <person name="Liu E.T."/>
            <person name="Brusic V."/>
            <person name="Quackenbush J."/>
            <person name="Wahlestedt C."/>
            <person name="Mattick J.S."/>
            <person name="Hume D.A."/>
            <person name="Kai C."/>
            <person name="Sasaki D."/>
            <person name="Tomaru Y."/>
            <person name="Fukuda S."/>
            <person name="Kanamori-Katayama M."/>
            <person name="Suzuki M."/>
            <person name="Aoki J."/>
            <person name="Arakawa T."/>
            <person name="Iida J."/>
            <person name="Imamura K."/>
            <person name="Itoh M."/>
            <person name="Kato T."/>
            <person name="Kawaji H."/>
            <person name="Kawagashira N."/>
            <person name="Kawashima T."/>
            <person name="Kojima M."/>
            <person name="Kondo S."/>
            <person name="Konno H."/>
            <person name="Nakano K."/>
            <person name="Ninomiya N."/>
            <person name="Nishio T."/>
            <person name="Okada M."/>
            <person name="Plessy C."/>
            <person name="Shibata K."/>
            <person name="Shiraki T."/>
            <person name="Suzuki S."/>
            <person name="Tagami M."/>
            <person name="Waki K."/>
            <person name="Watahiki A."/>
            <person name="Okamura-Oho Y."/>
            <person name="Suzuki H."/>
            <person name="Kawai J."/>
            <person name="Hayashizaki Y."/>
        </authorList>
    </citation>
    <scope>NUCLEOTIDE SEQUENCE [LARGE SCALE MRNA] (ISOFORMS 1 AND 2)</scope>
    <source>
        <strain>C57BL/6J</strain>
        <tissue>Medulla oblongata</tissue>
    </source>
</reference>
<reference key="2">
    <citation type="journal article" date="2004" name="Genome Res.">
        <title>The status, quality, and expansion of the NIH full-length cDNA project: the Mammalian Gene Collection (MGC).</title>
        <authorList>
            <consortium name="The MGC Project Team"/>
        </authorList>
    </citation>
    <scope>NUCLEOTIDE SEQUENCE [LARGE SCALE MRNA] (ISOFORMS 1 AND 3)</scope>
    <source>
        <strain>C57BL/6J</strain>
        <tissue>Brain</tissue>
    </source>
</reference>
<keyword id="KW-0025">Alternative splicing</keyword>
<keyword id="KW-0238">DNA-binding</keyword>
<keyword id="KW-0479">Metal-binding</keyword>
<keyword id="KW-0539">Nucleus</keyword>
<keyword id="KW-1185">Reference proteome</keyword>
<keyword id="KW-0677">Repeat</keyword>
<keyword id="KW-0862">Zinc</keyword>
<keyword id="KW-0863">Zinc-finger</keyword>
<comment type="subcellular location">
    <subcellularLocation>
        <location evidence="1">Nucleus</location>
    </subcellularLocation>
</comment>
<comment type="alternative products">
    <event type="alternative splicing"/>
    <isoform>
        <id>Q8BZ94-1</id>
        <name>1</name>
        <sequence type="displayed"/>
    </isoform>
    <isoform>
        <id>Q8BZ94-2</id>
        <name>2</name>
        <sequence type="described" ref="VSP_027477"/>
    </isoform>
    <isoform>
        <id>Q8BZ94-3</id>
        <name>3</name>
        <sequence type="described" ref="VSP_027478"/>
    </isoform>
</comment>
<organism>
    <name type="scientific">Mus musculus</name>
    <name type="common">Mouse</name>
    <dbReference type="NCBI Taxonomy" id="10090"/>
    <lineage>
        <taxon>Eukaryota</taxon>
        <taxon>Metazoa</taxon>
        <taxon>Chordata</taxon>
        <taxon>Craniata</taxon>
        <taxon>Vertebrata</taxon>
        <taxon>Euteleostomi</taxon>
        <taxon>Mammalia</taxon>
        <taxon>Eutheria</taxon>
        <taxon>Euarchontoglires</taxon>
        <taxon>Glires</taxon>
        <taxon>Rodentia</taxon>
        <taxon>Myomorpha</taxon>
        <taxon>Muroidea</taxon>
        <taxon>Muridae</taxon>
        <taxon>Murinae</taxon>
        <taxon>Mus</taxon>
        <taxon>Mus</taxon>
    </lineage>
</organism>
<name>ZMAT4_MOUSE</name>
<accession>Q8BZ94</accession>
<accession>Q3USG2</accession>
<accession>Q6AXC5</accession>
<sequence>MKSSDIDQDLFTDSYCKVCSAQLISESQRVAHYESRKHASKVRLYYMLHPRDGGCPAKRLRAENGSDADMVDKNKCCTLCNMSFTSAVVADSHYQGKIHAKRLKLLLGEKPPLKTTAAPLSSLKAPRVDTAPVVASPYQRRDSDRYCGLCAAWFNNPLMAQQHYEGKKHKKNAARVALLEQLGTSLDLGELRGLRRTYRCTTCSVSLNSIEQYHAHLQGSKHQTNLKNK</sequence>
<protein>
    <recommendedName>
        <fullName>Zinc finger matrin-type protein 4</fullName>
    </recommendedName>
</protein>